<evidence type="ECO:0000255" key="1">
    <source>
        <dbReference type="HAMAP-Rule" id="MF_01394"/>
    </source>
</evidence>
<organism>
    <name type="scientific">Acidiphilium cryptum (strain JF-5)</name>
    <dbReference type="NCBI Taxonomy" id="349163"/>
    <lineage>
        <taxon>Bacteria</taxon>
        <taxon>Pseudomonadati</taxon>
        <taxon>Pseudomonadota</taxon>
        <taxon>Alphaproteobacteria</taxon>
        <taxon>Acetobacterales</taxon>
        <taxon>Acidocellaceae</taxon>
        <taxon>Acidiphilium</taxon>
    </lineage>
</organism>
<name>NUOA_ACICJ</name>
<feature type="chain" id="PRO_0000362609" description="NADH-quinone oxidoreductase subunit A">
    <location>
        <begin position="1"/>
        <end position="132"/>
    </location>
</feature>
<feature type="transmembrane region" description="Helical" evidence="1">
    <location>
        <begin position="7"/>
        <end position="27"/>
    </location>
</feature>
<feature type="transmembrane region" description="Helical" evidence="1">
    <location>
        <begin position="62"/>
        <end position="82"/>
    </location>
</feature>
<feature type="transmembrane region" description="Helical" evidence="1">
    <location>
        <begin position="91"/>
        <end position="111"/>
    </location>
</feature>
<protein>
    <recommendedName>
        <fullName evidence="1">NADH-quinone oxidoreductase subunit A</fullName>
        <ecNumber evidence="1">7.1.1.-</ecNumber>
    </recommendedName>
    <alternativeName>
        <fullName evidence="1">NADH dehydrogenase I subunit A</fullName>
    </alternativeName>
    <alternativeName>
        <fullName evidence="1">NDH-1 subunit A</fullName>
    </alternativeName>
    <alternativeName>
        <fullName evidence="1">NUO1</fullName>
    </alternativeName>
</protein>
<sequence length="132" mass="14847">MADNAHYWVLLVYTFVVIALVAGMIGVSHFLGQRHLKRATIEPFESGIVTVGYARFRLPVQFYLIAMFFVIFDLEAAYLYAWATAVHAAGWTGYLVIAVFILALLAALAYLWRAGALEWGPKPRALAIVRRR</sequence>
<accession>A5FXK0</accession>
<keyword id="KW-0997">Cell inner membrane</keyword>
<keyword id="KW-1003">Cell membrane</keyword>
<keyword id="KW-0472">Membrane</keyword>
<keyword id="KW-0520">NAD</keyword>
<keyword id="KW-0874">Quinone</keyword>
<keyword id="KW-1185">Reference proteome</keyword>
<keyword id="KW-1278">Translocase</keyword>
<keyword id="KW-0812">Transmembrane</keyword>
<keyword id="KW-1133">Transmembrane helix</keyword>
<keyword id="KW-0813">Transport</keyword>
<keyword id="KW-0830">Ubiquinone</keyword>
<comment type="function">
    <text evidence="1">NDH-1 shuttles electrons from NADH, via FMN and iron-sulfur (Fe-S) centers, to quinones in the respiratory chain. The immediate electron acceptor for the enzyme in this species is believed to be ubiquinone. Couples the redox reaction to proton translocation (for every two electrons transferred, four hydrogen ions are translocated across the cytoplasmic membrane), and thus conserves the redox energy in a proton gradient.</text>
</comment>
<comment type="catalytic activity">
    <reaction evidence="1">
        <text>a quinone + NADH + 5 H(+)(in) = a quinol + NAD(+) + 4 H(+)(out)</text>
        <dbReference type="Rhea" id="RHEA:57888"/>
        <dbReference type="ChEBI" id="CHEBI:15378"/>
        <dbReference type="ChEBI" id="CHEBI:24646"/>
        <dbReference type="ChEBI" id="CHEBI:57540"/>
        <dbReference type="ChEBI" id="CHEBI:57945"/>
        <dbReference type="ChEBI" id="CHEBI:132124"/>
    </reaction>
</comment>
<comment type="subunit">
    <text evidence="1">NDH-1 is composed of 14 different subunits. Subunits NuoA, H, J, K, L, M, N constitute the membrane sector of the complex.</text>
</comment>
<comment type="subcellular location">
    <subcellularLocation>
        <location evidence="1">Cell inner membrane</location>
        <topology evidence="1">Multi-pass membrane protein</topology>
    </subcellularLocation>
</comment>
<comment type="similarity">
    <text evidence="1">Belongs to the complex I subunit 3 family.</text>
</comment>
<gene>
    <name evidence="1" type="primary">nuoA</name>
    <name type="ordered locus">Acry_1120</name>
</gene>
<reference key="1">
    <citation type="submission" date="2007-05" db="EMBL/GenBank/DDBJ databases">
        <title>Complete sequence of chromosome of Acidiphilium cryptum JF-5.</title>
        <authorList>
            <consortium name="US DOE Joint Genome Institute"/>
            <person name="Copeland A."/>
            <person name="Lucas S."/>
            <person name="Lapidus A."/>
            <person name="Barry K."/>
            <person name="Detter J.C."/>
            <person name="Glavina del Rio T."/>
            <person name="Hammon N."/>
            <person name="Israni S."/>
            <person name="Dalin E."/>
            <person name="Tice H."/>
            <person name="Pitluck S."/>
            <person name="Sims D."/>
            <person name="Brettin T."/>
            <person name="Bruce D."/>
            <person name="Han C."/>
            <person name="Schmutz J."/>
            <person name="Larimer F."/>
            <person name="Land M."/>
            <person name="Hauser L."/>
            <person name="Kyrpides N."/>
            <person name="Kim E."/>
            <person name="Magnuson T."/>
            <person name="Richardson P."/>
        </authorList>
    </citation>
    <scope>NUCLEOTIDE SEQUENCE [LARGE SCALE GENOMIC DNA]</scope>
    <source>
        <strain>JF-5</strain>
    </source>
</reference>
<dbReference type="EC" id="7.1.1.-" evidence="1"/>
<dbReference type="EMBL" id="CP000697">
    <property type="protein sequence ID" value="ABQ30332.1"/>
    <property type="molecule type" value="Genomic_DNA"/>
</dbReference>
<dbReference type="RefSeq" id="WP_011942004.1">
    <property type="nucleotide sequence ID" value="NC_009484.1"/>
</dbReference>
<dbReference type="SMR" id="A5FXK0"/>
<dbReference type="STRING" id="349163.Acry_1120"/>
<dbReference type="KEGG" id="acr:Acry_1120"/>
<dbReference type="eggNOG" id="COG0838">
    <property type="taxonomic scope" value="Bacteria"/>
</dbReference>
<dbReference type="HOGENOM" id="CLU_119549_2_1_5"/>
<dbReference type="Proteomes" id="UP000000245">
    <property type="component" value="Chromosome"/>
</dbReference>
<dbReference type="GO" id="GO:0030964">
    <property type="term" value="C:NADH dehydrogenase complex"/>
    <property type="evidence" value="ECO:0007669"/>
    <property type="project" value="TreeGrafter"/>
</dbReference>
<dbReference type="GO" id="GO:0005886">
    <property type="term" value="C:plasma membrane"/>
    <property type="evidence" value="ECO:0007669"/>
    <property type="project" value="UniProtKB-SubCell"/>
</dbReference>
<dbReference type="GO" id="GO:0008137">
    <property type="term" value="F:NADH dehydrogenase (ubiquinone) activity"/>
    <property type="evidence" value="ECO:0007669"/>
    <property type="project" value="InterPro"/>
</dbReference>
<dbReference type="GO" id="GO:0050136">
    <property type="term" value="F:NADH:ubiquinone reductase (non-electrogenic) activity"/>
    <property type="evidence" value="ECO:0007669"/>
    <property type="project" value="UniProtKB-UniRule"/>
</dbReference>
<dbReference type="GO" id="GO:0048038">
    <property type="term" value="F:quinone binding"/>
    <property type="evidence" value="ECO:0007669"/>
    <property type="project" value="UniProtKB-KW"/>
</dbReference>
<dbReference type="Gene3D" id="1.20.58.1610">
    <property type="entry name" value="NADH:ubiquinone/plastoquinone oxidoreductase, chain 3"/>
    <property type="match status" value="1"/>
</dbReference>
<dbReference type="HAMAP" id="MF_01394">
    <property type="entry name" value="NDH1_NuoA"/>
    <property type="match status" value="1"/>
</dbReference>
<dbReference type="InterPro" id="IPR023043">
    <property type="entry name" value="NAD(P)H_OxRDtase_bac/plastid"/>
</dbReference>
<dbReference type="InterPro" id="IPR000440">
    <property type="entry name" value="NADH_UbQ/plastoQ_OxRdtase_su3"/>
</dbReference>
<dbReference type="InterPro" id="IPR038430">
    <property type="entry name" value="NDAH_ubi_oxred_su3_sf"/>
</dbReference>
<dbReference type="PANTHER" id="PTHR11058:SF21">
    <property type="entry name" value="NADH-QUINONE OXIDOREDUCTASE SUBUNIT A"/>
    <property type="match status" value="1"/>
</dbReference>
<dbReference type="PANTHER" id="PTHR11058">
    <property type="entry name" value="NADH-UBIQUINONE OXIDOREDUCTASE CHAIN 3"/>
    <property type="match status" value="1"/>
</dbReference>
<dbReference type="Pfam" id="PF00507">
    <property type="entry name" value="Oxidored_q4"/>
    <property type="match status" value="1"/>
</dbReference>
<proteinExistence type="inferred from homology"/>